<gene>
    <name evidence="1" type="primary">cof</name>
    <name type="ordered locus">ECP_0507</name>
</gene>
<evidence type="ECO:0000255" key="1">
    <source>
        <dbReference type="HAMAP-Rule" id="MF_01847"/>
    </source>
</evidence>
<name>COF_ECOL5</name>
<protein>
    <recommendedName>
        <fullName evidence="1">HMP-PP phosphatase</fullName>
        <ecNumber evidence="1">3.6.1.-</ecNumber>
    </recommendedName>
</protein>
<organism>
    <name type="scientific">Escherichia coli O6:K15:H31 (strain 536 / UPEC)</name>
    <dbReference type="NCBI Taxonomy" id="362663"/>
    <lineage>
        <taxon>Bacteria</taxon>
        <taxon>Pseudomonadati</taxon>
        <taxon>Pseudomonadota</taxon>
        <taxon>Gammaproteobacteria</taxon>
        <taxon>Enterobacterales</taxon>
        <taxon>Enterobacteriaceae</taxon>
        <taxon>Escherichia</taxon>
    </lineage>
</organism>
<dbReference type="EC" id="3.6.1.-" evidence="1"/>
<dbReference type="EMBL" id="CP000247">
    <property type="protein sequence ID" value="ABG68536.1"/>
    <property type="molecule type" value="Genomic_DNA"/>
</dbReference>
<dbReference type="RefSeq" id="WP_000113027.1">
    <property type="nucleotide sequence ID" value="NC_008253.1"/>
</dbReference>
<dbReference type="SMR" id="Q0TKJ5"/>
<dbReference type="GeneID" id="93777004"/>
<dbReference type="KEGG" id="ecp:ECP_0507"/>
<dbReference type="HOGENOM" id="CLU_044146_5_2_6"/>
<dbReference type="Proteomes" id="UP000009182">
    <property type="component" value="Chromosome"/>
</dbReference>
<dbReference type="GO" id="GO:0002145">
    <property type="term" value="F:4-amino-5-hydroxymethyl-2-methylpyrimidine diphosphatase activity"/>
    <property type="evidence" value="ECO:0007669"/>
    <property type="project" value="RHEA"/>
</dbReference>
<dbReference type="GO" id="GO:0000287">
    <property type="term" value="F:magnesium ion binding"/>
    <property type="evidence" value="ECO:0000250"/>
    <property type="project" value="UniProtKB"/>
</dbReference>
<dbReference type="GO" id="GO:0016791">
    <property type="term" value="F:phosphatase activity"/>
    <property type="evidence" value="ECO:0000250"/>
    <property type="project" value="UniProtKB"/>
</dbReference>
<dbReference type="CDD" id="cd07516">
    <property type="entry name" value="HAD_Pase"/>
    <property type="match status" value="1"/>
</dbReference>
<dbReference type="FunFam" id="3.30.1240.10:FF:000002">
    <property type="entry name" value="HMP-PP phosphatase"/>
    <property type="match status" value="1"/>
</dbReference>
<dbReference type="Gene3D" id="3.30.1240.10">
    <property type="match status" value="1"/>
</dbReference>
<dbReference type="Gene3D" id="3.40.50.1000">
    <property type="entry name" value="HAD superfamily/HAD-like"/>
    <property type="match status" value="1"/>
</dbReference>
<dbReference type="HAMAP" id="MF_01847">
    <property type="entry name" value="HMP_PP_phosphat"/>
    <property type="match status" value="1"/>
</dbReference>
<dbReference type="InterPro" id="IPR000150">
    <property type="entry name" value="Cof"/>
</dbReference>
<dbReference type="InterPro" id="IPR036412">
    <property type="entry name" value="HAD-like_sf"/>
</dbReference>
<dbReference type="InterPro" id="IPR006379">
    <property type="entry name" value="HAD-SF_hydro_IIB"/>
</dbReference>
<dbReference type="InterPro" id="IPR023214">
    <property type="entry name" value="HAD_sf"/>
</dbReference>
<dbReference type="InterPro" id="IPR023938">
    <property type="entry name" value="HMP-PP_phosphatase"/>
</dbReference>
<dbReference type="NCBIfam" id="TIGR00099">
    <property type="entry name" value="Cof-subfamily"/>
    <property type="match status" value="1"/>
</dbReference>
<dbReference type="NCBIfam" id="TIGR01484">
    <property type="entry name" value="HAD-SF-IIB"/>
    <property type="match status" value="1"/>
</dbReference>
<dbReference type="NCBIfam" id="NF011705">
    <property type="entry name" value="PRK15126.1"/>
    <property type="match status" value="1"/>
</dbReference>
<dbReference type="PANTHER" id="PTHR47267">
    <property type="match status" value="1"/>
</dbReference>
<dbReference type="PANTHER" id="PTHR47267:SF2">
    <property type="entry name" value="HMP-PP PHOSPHATASE"/>
    <property type="match status" value="1"/>
</dbReference>
<dbReference type="Pfam" id="PF08282">
    <property type="entry name" value="Hydrolase_3"/>
    <property type="match status" value="1"/>
</dbReference>
<dbReference type="SFLD" id="SFLDG01140">
    <property type="entry name" value="C2.B:_Phosphomannomutase_and_P"/>
    <property type="match status" value="1"/>
</dbReference>
<dbReference type="SFLD" id="SFLDS00003">
    <property type="entry name" value="Haloacid_Dehalogenase"/>
    <property type="match status" value="1"/>
</dbReference>
<dbReference type="SUPFAM" id="SSF56784">
    <property type="entry name" value="HAD-like"/>
    <property type="match status" value="1"/>
</dbReference>
<dbReference type="PROSITE" id="PS01228">
    <property type="entry name" value="COF_1"/>
    <property type="match status" value="1"/>
</dbReference>
<dbReference type="PROSITE" id="PS01229">
    <property type="entry name" value="COF_2"/>
    <property type="match status" value="1"/>
</dbReference>
<proteinExistence type="inferred from homology"/>
<comment type="function">
    <text evidence="1">Catalyzes the hydrolysis of 4-amino-2-methyl-5-hydroxymethylpyrimidine pyrophosphate (HMP-PP) to 4-amino-2-methyl-5-hydroxymethylpyrimidine phosphate (HMP-P).</text>
</comment>
<comment type="catalytic activity">
    <reaction evidence="1">
        <text>4-amino-2-methyl-5-(diphosphooxymethyl)pyrimidine + H2O = 4-amino-2-methyl-5-(phosphooxymethyl)pyrimidine + phosphate + H(+)</text>
        <dbReference type="Rhea" id="RHEA:27914"/>
        <dbReference type="ChEBI" id="CHEBI:15377"/>
        <dbReference type="ChEBI" id="CHEBI:15378"/>
        <dbReference type="ChEBI" id="CHEBI:43474"/>
        <dbReference type="ChEBI" id="CHEBI:57841"/>
        <dbReference type="ChEBI" id="CHEBI:58354"/>
    </reaction>
</comment>
<comment type="cofactor">
    <cofactor evidence="1">
        <name>Mg(2+)</name>
        <dbReference type="ChEBI" id="CHEBI:18420"/>
    </cofactor>
</comment>
<comment type="similarity">
    <text evidence="1">Belongs to the HAD-like hydrolase superfamily. Cof family.</text>
</comment>
<feature type="chain" id="PRO_0000342985" description="HMP-PP phosphatase">
    <location>
        <begin position="1"/>
        <end position="272"/>
    </location>
</feature>
<feature type="active site" description="Nucleophile" evidence="1">
    <location>
        <position position="8"/>
    </location>
</feature>
<feature type="binding site" evidence="1">
    <location>
        <position position="8"/>
    </location>
    <ligand>
        <name>Mg(2+)</name>
        <dbReference type="ChEBI" id="CHEBI:18420"/>
    </ligand>
</feature>
<feature type="binding site" evidence="1">
    <location>
        <position position="10"/>
    </location>
    <ligand>
        <name>Mg(2+)</name>
        <dbReference type="ChEBI" id="CHEBI:18420"/>
    </ligand>
</feature>
<feature type="binding site" evidence="1">
    <location>
        <position position="212"/>
    </location>
    <ligand>
        <name>Mg(2+)</name>
        <dbReference type="ChEBI" id="CHEBI:18420"/>
    </ligand>
</feature>
<keyword id="KW-0378">Hydrolase</keyword>
<keyword id="KW-0460">Magnesium</keyword>
<keyword id="KW-0479">Metal-binding</keyword>
<reference key="1">
    <citation type="journal article" date="2006" name="Mol. Microbiol.">
        <title>Role of pathogenicity island-associated integrases in the genome plasticity of uropathogenic Escherichia coli strain 536.</title>
        <authorList>
            <person name="Hochhut B."/>
            <person name="Wilde C."/>
            <person name="Balling G."/>
            <person name="Middendorf B."/>
            <person name="Dobrindt U."/>
            <person name="Brzuszkiewicz E."/>
            <person name="Gottschalk G."/>
            <person name="Carniel E."/>
            <person name="Hacker J."/>
        </authorList>
    </citation>
    <scope>NUCLEOTIDE SEQUENCE [LARGE SCALE GENOMIC DNA]</scope>
    <source>
        <strain>536 / UPEC</strain>
    </source>
</reference>
<accession>Q0TKJ5</accession>
<sequence>MARLAAFDMDGTLLMPDHHLGEKTLSTLARLRERDITLTFATGRHALEMQHILGALSLDAYLITGNGTRVHSLEGELLHRDDLPADVAELVLYQQWDTRASMHIFNDDGWFTGKEIPALLQAFVYSGFRYQIIDVKKMPLGSVTKICFCGDHDDLTRLQIQLYEALGERAHLCFSATDCLEVLPVGCNKGAALTVLTQHLGLSLRDCMAFGDAMNDREMLGSVGSGFIMGNAMPQLRAELPHLPVIGHCRNQAVSHYLTHWLDYPHLPYSPE</sequence>